<accession>Q8CPU8</accession>
<sequence>MSLLHIAVLLPLIFALIIPFLYRFVKRIHLGWFVLPVPIVLFIYFISLISMTMSGNNVMKNLNWMPHIGMNFNLYVDGLGLLFSLLITGIGSLVVLYSIGYLSKSEQLGNFYCYLLLFMGAMLGVVLSDNFIILYLFWELTSFSSFLLISFWREKKASIYGAQKSLIITVLGGLSMLGGIILLSLATDTFSIQAMISKASDIQNSPFFILVMILFMIGAFTKSAQVPFYIWLPDAMEAPTPVSAYLHSATMVKAGLYLIARITPIFAISEGWVWTITLVGLITLFWASLNATKQHDLKGILAFSTVSQLGMIMSMLGIGAVSYHYQGANSQLYVAGFVAAIFHLINHATFKGALFMITGGIDHSTGTRDVKKLGGLLTIMPISFTLTVITTLSMAGVPPFNGFLSKEKFLESMINVTHLNLMSLNTLGILLPIIAIIGSIFTFVYSIKFILHIFFGSYKPEALPKQAHESSILMLISPIILTSLVIVFGLFPSILTQSIIEPASVAVSQTSNITAEFHLFHGITPAFLSTIGIYIIGILLLISFSYWVRLLQAHPYQLTLNHWYDTSGQRIPGYSENITNSYVTGFSRNNLVIILGILIALTFVTVISVPFSIDFKNVSHLRVFEGATVLFLLIASTFIIFAKSRLFSIIMLSAVGYAISVLFIFFKAPDLALTQFVVESISTALFLLCFYHLPNLNRYNEKPTFKLTNAVISIGVGLSVIILGLIGYGNRHFDSITKFYQEHVFDLAHGKNMVNVILVDFRGMDTLFESSVLGIAGLGVYTMIKLRLKQKNQSSEVNDHE</sequence>
<gene>
    <name type="primary">mnhA1</name>
    <name type="ordered locus">SE_0646</name>
</gene>
<proteinExistence type="inferred from homology"/>
<feature type="chain" id="PRO_0000372101" description="Na(+)/H(+) antiporter subunit A1">
    <location>
        <begin position="1"/>
        <end position="801"/>
    </location>
</feature>
<feature type="transmembrane region" description="Helical" evidence="2">
    <location>
        <begin position="1"/>
        <end position="21"/>
    </location>
</feature>
<feature type="transmembrane region" description="Helical" evidence="2">
    <location>
        <begin position="30"/>
        <end position="50"/>
    </location>
</feature>
<feature type="transmembrane region" description="Helical" evidence="2">
    <location>
        <begin position="79"/>
        <end position="99"/>
    </location>
</feature>
<feature type="transmembrane region" description="Helical" evidence="2">
    <location>
        <begin position="117"/>
        <end position="137"/>
    </location>
</feature>
<feature type="transmembrane region" description="Helical" evidence="2">
    <location>
        <begin position="166"/>
        <end position="186"/>
    </location>
</feature>
<feature type="transmembrane region" description="Helical" evidence="2">
    <location>
        <begin position="206"/>
        <end position="226"/>
    </location>
</feature>
<feature type="transmembrane region" description="Helical" evidence="2">
    <location>
        <begin position="228"/>
        <end position="250"/>
    </location>
</feature>
<feature type="transmembrane region" description="Helical" evidence="2">
    <location>
        <begin position="265"/>
        <end position="285"/>
    </location>
</feature>
<feature type="transmembrane region" description="Helical" evidence="2">
    <location>
        <begin position="300"/>
        <end position="320"/>
    </location>
</feature>
<feature type="transmembrane region" description="Helical" evidence="2">
    <location>
        <begin position="337"/>
        <end position="357"/>
    </location>
</feature>
<feature type="transmembrane region" description="Helical" evidence="2">
    <location>
        <begin position="373"/>
        <end position="393"/>
    </location>
</feature>
<feature type="transmembrane region" description="Helical" evidence="2">
    <location>
        <begin position="427"/>
        <end position="447"/>
    </location>
</feature>
<feature type="transmembrane region" description="Helical" evidence="2">
    <location>
        <begin position="472"/>
        <end position="492"/>
    </location>
</feature>
<feature type="transmembrane region" description="Helical" evidence="2">
    <location>
        <begin position="522"/>
        <end position="542"/>
    </location>
</feature>
<feature type="transmembrane region" description="Helical" evidence="2">
    <location>
        <begin position="591"/>
        <end position="611"/>
    </location>
</feature>
<feature type="transmembrane region" description="Helical" evidence="2">
    <location>
        <begin position="623"/>
        <end position="643"/>
    </location>
</feature>
<feature type="transmembrane region" description="Helical" evidence="2">
    <location>
        <begin position="646"/>
        <end position="666"/>
    </location>
</feature>
<feature type="transmembrane region" description="Helical" evidence="2">
    <location>
        <begin position="671"/>
        <end position="691"/>
    </location>
</feature>
<feature type="transmembrane region" description="Helical" evidence="2">
    <location>
        <begin position="707"/>
        <end position="727"/>
    </location>
</feature>
<feature type="transmembrane region" description="Helical" evidence="2">
    <location>
        <begin position="764"/>
        <end position="784"/>
    </location>
</feature>
<protein>
    <recommendedName>
        <fullName>Na(+)/H(+) antiporter subunit A1</fullName>
    </recommendedName>
    <alternativeName>
        <fullName>Mnh complex subunit A1</fullName>
    </alternativeName>
</protein>
<name>MNHA1_STAES</name>
<keyword id="KW-0050">Antiport</keyword>
<keyword id="KW-1003">Cell membrane</keyword>
<keyword id="KW-0375">Hydrogen ion transport</keyword>
<keyword id="KW-0406">Ion transport</keyword>
<keyword id="KW-0472">Membrane</keyword>
<keyword id="KW-0915">Sodium</keyword>
<keyword id="KW-0739">Sodium transport</keyword>
<keyword id="KW-0812">Transmembrane</keyword>
<keyword id="KW-1133">Transmembrane helix</keyword>
<keyword id="KW-0813">Transport</keyword>
<evidence type="ECO:0000250" key="1"/>
<evidence type="ECO:0000255" key="2"/>
<evidence type="ECO:0000305" key="3"/>
<dbReference type="EMBL" id="AE015929">
    <property type="protein sequence ID" value="AAO04243.1"/>
    <property type="molecule type" value="Genomic_DNA"/>
</dbReference>
<dbReference type="RefSeq" id="NP_764201.1">
    <property type="nucleotide sequence ID" value="NC_004461.1"/>
</dbReference>
<dbReference type="RefSeq" id="WP_001832516.1">
    <property type="nucleotide sequence ID" value="NZ_WBME01000044.1"/>
</dbReference>
<dbReference type="SMR" id="Q8CPU8"/>
<dbReference type="KEGG" id="sep:SE_0646"/>
<dbReference type="PATRIC" id="fig|176280.10.peg.619"/>
<dbReference type="eggNOG" id="COG1009">
    <property type="taxonomic scope" value="Bacteria"/>
</dbReference>
<dbReference type="eggNOG" id="COG2111">
    <property type="taxonomic scope" value="Bacteria"/>
</dbReference>
<dbReference type="HOGENOM" id="CLU_007100_2_1_9"/>
<dbReference type="OrthoDB" id="9807568at2"/>
<dbReference type="Proteomes" id="UP000001411">
    <property type="component" value="Chromosome"/>
</dbReference>
<dbReference type="GO" id="GO:0005886">
    <property type="term" value="C:plasma membrane"/>
    <property type="evidence" value="ECO:0007669"/>
    <property type="project" value="UniProtKB-SubCell"/>
</dbReference>
<dbReference type="GO" id="GO:0015297">
    <property type="term" value="F:antiporter activity"/>
    <property type="evidence" value="ECO:0007669"/>
    <property type="project" value="UniProtKB-KW"/>
</dbReference>
<dbReference type="GO" id="GO:1902600">
    <property type="term" value="P:proton transmembrane transport"/>
    <property type="evidence" value="ECO:0007669"/>
    <property type="project" value="UniProtKB-KW"/>
</dbReference>
<dbReference type="GO" id="GO:0006814">
    <property type="term" value="P:sodium ion transport"/>
    <property type="evidence" value="ECO:0007669"/>
    <property type="project" value="UniProtKB-KW"/>
</dbReference>
<dbReference type="InterPro" id="IPR050616">
    <property type="entry name" value="CPA3_Na-H_Antiporter_A"/>
</dbReference>
<dbReference type="InterPro" id="IPR005663">
    <property type="entry name" value="MrpA/MnhA1/PhaAB"/>
</dbReference>
<dbReference type="InterPro" id="IPR025383">
    <property type="entry name" value="MrpA_C/MbhD"/>
</dbReference>
<dbReference type="InterPro" id="IPR046806">
    <property type="entry name" value="MrpA_C/MbhE"/>
</dbReference>
<dbReference type="InterPro" id="IPR001750">
    <property type="entry name" value="ND/Mrp_TM"/>
</dbReference>
<dbReference type="InterPro" id="IPR001516">
    <property type="entry name" value="Proton_antipo_N"/>
</dbReference>
<dbReference type="NCBIfam" id="TIGR00940">
    <property type="entry name" value="2a6301s01"/>
    <property type="match status" value="1"/>
</dbReference>
<dbReference type="NCBIfam" id="NF009285">
    <property type="entry name" value="PRK12645.1"/>
    <property type="match status" value="1"/>
</dbReference>
<dbReference type="PANTHER" id="PTHR43373">
    <property type="entry name" value="NA(+)/H(+) ANTIPORTER SUBUNIT"/>
    <property type="match status" value="1"/>
</dbReference>
<dbReference type="PANTHER" id="PTHR43373:SF1">
    <property type="entry name" value="NA(+)_H(+) ANTIPORTER SUBUNIT A"/>
    <property type="match status" value="1"/>
</dbReference>
<dbReference type="Pfam" id="PF13244">
    <property type="entry name" value="MbhD"/>
    <property type="match status" value="1"/>
</dbReference>
<dbReference type="Pfam" id="PF20501">
    <property type="entry name" value="MbhE"/>
    <property type="match status" value="1"/>
</dbReference>
<dbReference type="Pfam" id="PF00361">
    <property type="entry name" value="Proton_antipo_M"/>
    <property type="match status" value="1"/>
</dbReference>
<dbReference type="Pfam" id="PF00662">
    <property type="entry name" value="Proton_antipo_N"/>
    <property type="match status" value="1"/>
</dbReference>
<dbReference type="PRINTS" id="PR01434">
    <property type="entry name" value="NADHDHGNASE5"/>
</dbReference>
<dbReference type="PRINTS" id="PR01435">
    <property type="entry name" value="NPOXDRDTASE5"/>
</dbReference>
<organism>
    <name type="scientific">Staphylococcus epidermidis (strain ATCC 12228 / FDA PCI 1200)</name>
    <dbReference type="NCBI Taxonomy" id="176280"/>
    <lineage>
        <taxon>Bacteria</taxon>
        <taxon>Bacillati</taxon>
        <taxon>Bacillota</taxon>
        <taxon>Bacilli</taxon>
        <taxon>Bacillales</taxon>
        <taxon>Staphylococcaceae</taxon>
        <taxon>Staphylococcus</taxon>
    </lineage>
</organism>
<reference key="1">
    <citation type="journal article" date="2003" name="Mol. Microbiol.">
        <title>Genome-based analysis of virulence genes in a non-biofilm-forming Staphylococcus epidermidis strain (ATCC 12228).</title>
        <authorList>
            <person name="Zhang Y.-Q."/>
            <person name="Ren S.-X."/>
            <person name="Li H.-L."/>
            <person name="Wang Y.-X."/>
            <person name="Fu G."/>
            <person name="Yang J."/>
            <person name="Qin Z.-Q."/>
            <person name="Miao Y.-G."/>
            <person name="Wang W.-Y."/>
            <person name="Chen R.-S."/>
            <person name="Shen Y."/>
            <person name="Chen Z."/>
            <person name="Yuan Z.-H."/>
            <person name="Zhao G.-P."/>
            <person name="Qu D."/>
            <person name="Danchin A."/>
            <person name="Wen Y.-M."/>
        </authorList>
    </citation>
    <scope>NUCLEOTIDE SEQUENCE [LARGE SCALE GENOMIC DNA]</scope>
    <source>
        <strain>ATCC 12228 / FDA PCI 1200</strain>
    </source>
</reference>
<comment type="function">
    <text evidence="1">Mnh complex is a Na(+)/H(+) antiporter involved in Na(+) excretion.</text>
</comment>
<comment type="subunit">
    <text evidence="1">May form a heterooligomeric complex that consists of seven subunits: mnhA1, mnhB1, mnhC1, mnhD1, mnhE1, mnhF1 and mnhG1.</text>
</comment>
<comment type="subcellular location">
    <subcellularLocation>
        <location evidence="3">Cell membrane</location>
        <topology evidence="3">Multi-pass membrane protein</topology>
    </subcellularLocation>
</comment>
<comment type="similarity">
    <text evidence="3">Belongs to the CPA3 antiporters (TC 2.A.63) subunit A family.</text>
</comment>